<proteinExistence type="inferred from homology"/>
<organism>
    <name type="scientific">Trichlorobacter lovleyi (strain ATCC BAA-1151 / DSM 17278 / SZ)</name>
    <name type="common">Geobacter lovleyi</name>
    <dbReference type="NCBI Taxonomy" id="398767"/>
    <lineage>
        <taxon>Bacteria</taxon>
        <taxon>Pseudomonadati</taxon>
        <taxon>Thermodesulfobacteriota</taxon>
        <taxon>Desulfuromonadia</taxon>
        <taxon>Geobacterales</taxon>
        <taxon>Geobacteraceae</taxon>
        <taxon>Trichlorobacter</taxon>
    </lineage>
</organism>
<comment type="function">
    <text evidence="1">NDH-1 shuttles electrons from NADH, via FMN and iron-sulfur (Fe-S) centers, to quinones in the respiratory chain. The immediate electron acceptor for the enzyme in this species is believed to be ubiquinone. Couples the redox reaction to proton translocation (for every two electrons transferred, four hydrogen ions are translocated across the cytoplasmic membrane), and thus conserves the redox energy in a proton gradient.</text>
</comment>
<comment type="catalytic activity">
    <reaction evidence="1">
        <text>a quinone + NADH + 5 H(+)(in) = a quinol + NAD(+) + 4 H(+)(out)</text>
        <dbReference type="Rhea" id="RHEA:57888"/>
        <dbReference type="ChEBI" id="CHEBI:15378"/>
        <dbReference type="ChEBI" id="CHEBI:24646"/>
        <dbReference type="ChEBI" id="CHEBI:57540"/>
        <dbReference type="ChEBI" id="CHEBI:57945"/>
        <dbReference type="ChEBI" id="CHEBI:132124"/>
    </reaction>
</comment>
<comment type="subunit">
    <text evidence="1">NDH-1 is composed of 14 different subunits. Subunits NuoB, C, D, E, F, and G constitute the peripheral sector of the complex.</text>
</comment>
<comment type="subcellular location">
    <subcellularLocation>
        <location evidence="1">Cell inner membrane</location>
        <topology evidence="1">Peripheral membrane protein</topology>
        <orientation evidence="1">Cytoplasmic side</orientation>
    </subcellularLocation>
</comment>
<comment type="similarity">
    <text evidence="1">Belongs to the complex I 49 kDa subunit family.</text>
</comment>
<keyword id="KW-0997">Cell inner membrane</keyword>
<keyword id="KW-1003">Cell membrane</keyword>
<keyword id="KW-0472">Membrane</keyword>
<keyword id="KW-0520">NAD</keyword>
<keyword id="KW-0874">Quinone</keyword>
<keyword id="KW-1185">Reference proteome</keyword>
<keyword id="KW-1278">Translocase</keyword>
<keyword id="KW-0813">Transport</keyword>
<keyword id="KW-0830">Ubiquinone</keyword>
<sequence length="390" mass="43674">MANNEIMTINMGPQHPSTHGVLRMVIELDGETILKIDPDIGYLHRGVEKLSEHRTYHQTLPLTDRLDYLAPMSNNLGYMLAVEKLLGIEVPERAQTIRIIMTELTRLQSHLVWLACHALDIGAMTVFIYAFREREVIMETYELISGARMTSNFFRAGGLSQDVPAEFEKKVRDFVAEMPGFIDTYEGLLTGNPIWRKRTIGNGVISAEDATDIGITGPALRGSGVDFDLRRDIPYAGYENYQFKVPTGKNCDTFDRYQVRLIEMRESCKIVNQALERLKPGPVLADAPQVCYPPKDSVYNSIEGLIHHFKIASEGYPVPEGEVYMGVEAPKGELGFYLVSDGSSKPYRMRVRPPSFVNLQAIEKMAKGAMLADLVAIIGTLDIVLGEIDR</sequence>
<name>NUOD_TRIL1</name>
<evidence type="ECO:0000255" key="1">
    <source>
        <dbReference type="HAMAP-Rule" id="MF_01358"/>
    </source>
</evidence>
<protein>
    <recommendedName>
        <fullName evidence="1">NADH-quinone oxidoreductase subunit D</fullName>
        <ecNumber evidence="1">7.1.1.-</ecNumber>
    </recommendedName>
    <alternativeName>
        <fullName evidence="1">NADH dehydrogenase I subunit D</fullName>
    </alternativeName>
    <alternativeName>
        <fullName evidence="1">NDH-1 subunit D</fullName>
    </alternativeName>
</protein>
<accession>B3E9W6</accession>
<feature type="chain" id="PRO_0000357822" description="NADH-quinone oxidoreductase subunit D">
    <location>
        <begin position="1"/>
        <end position="390"/>
    </location>
</feature>
<gene>
    <name evidence="1" type="primary">nuoD</name>
    <name type="ordered locus">Glov_3135</name>
</gene>
<reference key="1">
    <citation type="submission" date="2008-05" db="EMBL/GenBank/DDBJ databases">
        <title>Complete sequence of chromosome of Geobacter lovleyi SZ.</title>
        <authorList>
            <consortium name="US DOE Joint Genome Institute"/>
            <person name="Lucas S."/>
            <person name="Copeland A."/>
            <person name="Lapidus A."/>
            <person name="Glavina del Rio T."/>
            <person name="Dalin E."/>
            <person name="Tice H."/>
            <person name="Bruce D."/>
            <person name="Goodwin L."/>
            <person name="Pitluck S."/>
            <person name="Chertkov O."/>
            <person name="Meincke L."/>
            <person name="Brettin T."/>
            <person name="Detter J.C."/>
            <person name="Han C."/>
            <person name="Tapia R."/>
            <person name="Kuske C.R."/>
            <person name="Schmutz J."/>
            <person name="Larimer F."/>
            <person name="Land M."/>
            <person name="Hauser L."/>
            <person name="Kyrpides N."/>
            <person name="Mikhailova N."/>
            <person name="Sung Y."/>
            <person name="Fletcher K.E."/>
            <person name="Ritalahti K.M."/>
            <person name="Loeffler F.E."/>
            <person name="Richardson P."/>
        </authorList>
    </citation>
    <scope>NUCLEOTIDE SEQUENCE [LARGE SCALE GENOMIC DNA]</scope>
    <source>
        <strain>ATCC BAA-1151 / DSM 17278 / SZ</strain>
    </source>
</reference>
<dbReference type="EC" id="7.1.1.-" evidence="1"/>
<dbReference type="EMBL" id="CP001089">
    <property type="protein sequence ID" value="ACD96841.1"/>
    <property type="molecule type" value="Genomic_DNA"/>
</dbReference>
<dbReference type="RefSeq" id="WP_012471165.1">
    <property type="nucleotide sequence ID" value="NC_010814.1"/>
</dbReference>
<dbReference type="SMR" id="B3E9W6"/>
<dbReference type="STRING" id="398767.Glov_3135"/>
<dbReference type="KEGG" id="glo:Glov_3135"/>
<dbReference type="eggNOG" id="COG0649">
    <property type="taxonomic scope" value="Bacteria"/>
</dbReference>
<dbReference type="HOGENOM" id="CLU_015134_1_2_7"/>
<dbReference type="OrthoDB" id="9801496at2"/>
<dbReference type="Proteomes" id="UP000002420">
    <property type="component" value="Chromosome"/>
</dbReference>
<dbReference type="GO" id="GO:0005886">
    <property type="term" value="C:plasma membrane"/>
    <property type="evidence" value="ECO:0007669"/>
    <property type="project" value="UniProtKB-SubCell"/>
</dbReference>
<dbReference type="GO" id="GO:0051287">
    <property type="term" value="F:NAD binding"/>
    <property type="evidence" value="ECO:0007669"/>
    <property type="project" value="InterPro"/>
</dbReference>
<dbReference type="GO" id="GO:0050136">
    <property type="term" value="F:NADH:ubiquinone reductase (non-electrogenic) activity"/>
    <property type="evidence" value="ECO:0007669"/>
    <property type="project" value="UniProtKB-UniRule"/>
</dbReference>
<dbReference type="GO" id="GO:0048038">
    <property type="term" value="F:quinone binding"/>
    <property type="evidence" value="ECO:0007669"/>
    <property type="project" value="UniProtKB-KW"/>
</dbReference>
<dbReference type="Gene3D" id="1.10.645.10">
    <property type="entry name" value="Cytochrome-c3 Hydrogenase, chain B"/>
    <property type="match status" value="1"/>
</dbReference>
<dbReference type="HAMAP" id="MF_01358">
    <property type="entry name" value="NDH1_NuoD"/>
    <property type="match status" value="1"/>
</dbReference>
<dbReference type="InterPro" id="IPR001135">
    <property type="entry name" value="NADH_Q_OxRdtase_suD"/>
</dbReference>
<dbReference type="InterPro" id="IPR014029">
    <property type="entry name" value="NADH_UbQ_OxRdtase_49kDa_CS"/>
</dbReference>
<dbReference type="InterPro" id="IPR022885">
    <property type="entry name" value="NDH1_su_D/H"/>
</dbReference>
<dbReference type="InterPro" id="IPR029014">
    <property type="entry name" value="NiFe-Hase_large"/>
</dbReference>
<dbReference type="NCBIfam" id="TIGR01962">
    <property type="entry name" value="NuoD"/>
    <property type="match status" value="1"/>
</dbReference>
<dbReference type="NCBIfam" id="NF004739">
    <property type="entry name" value="PRK06075.1"/>
    <property type="match status" value="1"/>
</dbReference>
<dbReference type="PANTHER" id="PTHR11993:SF10">
    <property type="entry name" value="NADH DEHYDROGENASE [UBIQUINONE] IRON-SULFUR PROTEIN 2, MITOCHONDRIAL"/>
    <property type="match status" value="1"/>
</dbReference>
<dbReference type="PANTHER" id="PTHR11993">
    <property type="entry name" value="NADH-UBIQUINONE OXIDOREDUCTASE 49 KDA SUBUNIT"/>
    <property type="match status" value="1"/>
</dbReference>
<dbReference type="Pfam" id="PF00346">
    <property type="entry name" value="Complex1_49kDa"/>
    <property type="match status" value="1"/>
</dbReference>
<dbReference type="SUPFAM" id="SSF56762">
    <property type="entry name" value="HydB/Nqo4-like"/>
    <property type="match status" value="1"/>
</dbReference>
<dbReference type="PROSITE" id="PS00535">
    <property type="entry name" value="COMPLEX1_49K"/>
    <property type="match status" value="1"/>
</dbReference>